<proteinExistence type="inferred from homology"/>
<reference key="1">
    <citation type="journal article" date="1992" name="Virology">
        <title>The phylogenetic relationship and complete nucleotide sequence of human papillomavirus type 35.</title>
        <authorList>
            <person name="Marich J.E."/>
            <person name="Pontsler A.V."/>
            <person name="Rice S.M."/>
            <person name="McGraw K.A."/>
            <person name="Dubensky T.W."/>
        </authorList>
    </citation>
    <scope>NUCLEOTIDE SEQUENCE [GENOMIC DNA]</scope>
</reference>
<accession>P27224</accession>
<organism>
    <name type="scientific">Human papillomavirus 35</name>
    <dbReference type="NCBI Taxonomy" id="10587"/>
    <lineage>
        <taxon>Viruses</taxon>
        <taxon>Monodnaviria</taxon>
        <taxon>Shotokuvirae</taxon>
        <taxon>Cossaviricota</taxon>
        <taxon>Papovaviricetes</taxon>
        <taxon>Zurhausenvirales</taxon>
        <taxon>Papillomaviridae</taxon>
        <taxon>Firstpapillomavirinae</taxon>
        <taxon>Alphapapillomavirus</taxon>
        <taxon>Alphapapillomavirus 9</taxon>
    </lineage>
</organism>
<keyword id="KW-0244">Early protein</keyword>
<keyword id="KW-1035">Host cytoplasm</keyword>
<keyword id="KW-1079">Host G2/M cell cycle arrest by virus</keyword>
<keyword id="KW-1048">Host nucleus</keyword>
<keyword id="KW-0945">Host-virus interaction</keyword>
<keyword id="KW-1121">Modulation of host cell cycle by virus</keyword>
<keyword id="KW-0597">Phosphoprotein</keyword>
<sequence>MADPAAAQNYPLLKLLHSYTPTTPPRPIPKPAPWAPQKPRRQITNDFEGVPSSPTTPPSECDSVPWTVLTEGSTLHLTAQTKTGVVVVVQLHL</sequence>
<name>VE4_HPV35</name>
<organismHost>
    <name type="scientific">Homo sapiens</name>
    <name type="common">Human</name>
    <dbReference type="NCBI Taxonomy" id="9606"/>
</organismHost>
<gene>
    <name type="primary">E4</name>
</gene>
<comment type="function">
    <text evidence="1">Contributes to multiple aspects of the viral life cycle including viral genome amplification, suppression of suprabasal cell differentiation and egress of newly formed virions. Induces host cell cycle arrest at the G2 phase by associating with and preventing the nuclear entry of host CDK1/cyclin B1 complexes. Inhibits cellular DNA replication by preventing loading of host replication licensing proteins MCM2 and MCM7 onto chromatin. Within the cytoplasm, associates with host kinase SRPK1, a splicing factor regulator, and inhibits its activity. Therefore, E4 favors expression of late viral transcripts by inhibiting SRPK1-mediated phosphorylation of host serine-arginine (SR) proteins that have critical roles in mRNA metabolism. Late in the infectious cycle, E4 also acts to diminish the integrity of the keratinocyte by disrupting the keratin cytoskeleton and inducing apoptosis through alteration of mitochondrial function to facilitate egress of the newly formed virions.</text>
</comment>
<comment type="subunit">
    <text evidence="1">Assembles into oligomeric complexes. Interacts with host CDK1. Interacts with host SRPK1; this interaction may favor expression of late viral transcripts. Interacts with host cytokeratin components KRT8 and KRT18.</text>
</comment>
<comment type="subcellular location">
    <subcellularLocation>
        <location evidence="1">Host cytoplasm</location>
    </subcellularLocation>
    <subcellularLocation>
        <location evidence="1">Host nucleus</location>
    </subcellularLocation>
</comment>
<comment type="PTM">
    <text evidence="1">Phosphorylated by host ERK. The phosphorylation triggers a structural change that enhances keratin binding and protein stability.</text>
</comment>
<comment type="miscellaneous">
    <text evidence="1">The major E4 form is first synthesized as an E1^E4 fusion protein from spliced E1^E4 transcripts, such that the first few amino acids of the E4 protein are derived from the N terminus of E1.</text>
</comment>
<comment type="similarity">
    <text evidence="3">Belongs to the papillomaviridae E4 protein family.</text>
</comment>
<feature type="chain" id="PRO_0000133271" description="Protein E4">
    <location>
        <begin position="1"/>
        <end position="93"/>
    </location>
</feature>
<feature type="region of interest" description="Disordered" evidence="2">
    <location>
        <begin position="18"/>
        <end position="64"/>
    </location>
</feature>
<feature type="compositionally biased region" description="Pro residues" evidence="2">
    <location>
        <begin position="22"/>
        <end position="36"/>
    </location>
</feature>
<protein>
    <recommendedName>
        <fullName>Protein E4</fullName>
    </recommendedName>
</protein>
<dbReference type="EMBL" id="M74117">
    <property type="protein sequence ID" value="AAA46965.2"/>
    <property type="status" value="ALT_SEQ"/>
    <property type="molecule type" value="Genomic_DNA"/>
</dbReference>
<dbReference type="PIR" id="C40824">
    <property type="entry name" value="W4WL35"/>
</dbReference>
<dbReference type="SMR" id="P27224"/>
<dbReference type="Proteomes" id="UP000113298">
    <property type="component" value="Genome"/>
</dbReference>
<dbReference type="GO" id="GO:0030430">
    <property type="term" value="C:host cell cytoplasm"/>
    <property type="evidence" value="ECO:0007669"/>
    <property type="project" value="UniProtKB-SubCell"/>
</dbReference>
<dbReference type="GO" id="GO:0042025">
    <property type="term" value="C:host cell nucleus"/>
    <property type="evidence" value="ECO:0007669"/>
    <property type="project" value="UniProtKB-SubCell"/>
</dbReference>
<dbReference type="GO" id="GO:0039592">
    <property type="term" value="P:symbiont-mediated arrest of host cell cycle during G2/M transition"/>
    <property type="evidence" value="ECO:0007669"/>
    <property type="project" value="UniProtKB-KW"/>
</dbReference>
<dbReference type="InterPro" id="IPR003861">
    <property type="entry name" value="Papilloma_E4"/>
</dbReference>
<dbReference type="Pfam" id="PF02711">
    <property type="entry name" value="Pap_E4"/>
    <property type="match status" value="1"/>
</dbReference>
<evidence type="ECO:0000250" key="1">
    <source>
        <dbReference type="UniProtKB" id="P06922"/>
    </source>
</evidence>
<evidence type="ECO:0000256" key="2">
    <source>
        <dbReference type="SAM" id="MobiDB-lite"/>
    </source>
</evidence>
<evidence type="ECO:0000305" key="3"/>